<dbReference type="EC" id="3.2.-.-" evidence="1"/>
<dbReference type="EMBL" id="AE006468">
    <property type="protein sequence ID" value="AAL19015.1"/>
    <property type="molecule type" value="Genomic_DNA"/>
</dbReference>
<dbReference type="RefSeq" id="NP_459056.1">
    <property type="nucleotide sequence ID" value="NC_003197.2"/>
</dbReference>
<dbReference type="RefSeq" id="WP_000127283.1">
    <property type="nucleotide sequence ID" value="NC_003197.2"/>
</dbReference>
<dbReference type="SMR" id="Q8ZRY7"/>
<dbReference type="STRING" id="99287.STM0051"/>
<dbReference type="PaxDb" id="99287-STM0051"/>
<dbReference type="GeneID" id="1251569"/>
<dbReference type="KEGG" id="stm:STM0051"/>
<dbReference type="PATRIC" id="fig|99287.12.peg.53"/>
<dbReference type="HOGENOM" id="CLU_036838_2_2_6"/>
<dbReference type="OMA" id="NEYTCPT"/>
<dbReference type="PhylomeDB" id="Q8ZRY7"/>
<dbReference type="BioCyc" id="SENT99287:STM0051-MONOMER"/>
<dbReference type="Proteomes" id="UP000001014">
    <property type="component" value="Chromosome"/>
</dbReference>
<dbReference type="GO" id="GO:0005829">
    <property type="term" value="C:cytosol"/>
    <property type="evidence" value="ECO:0000318"/>
    <property type="project" value="GO_Central"/>
</dbReference>
<dbReference type="GO" id="GO:0008477">
    <property type="term" value="F:purine nucleosidase activity"/>
    <property type="evidence" value="ECO:0000318"/>
    <property type="project" value="GO_Central"/>
</dbReference>
<dbReference type="GO" id="GO:0006144">
    <property type="term" value="P:purine nucleobase metabolic process"/>
    <property type="evidence" value="ECO:0007669"/>
    <property type="project" value="UniProtKB-UniRule"/>
</dbReference>
<dbReference type="GO" id="GO:0006152">
    <property type="term" value="P:purine nucleoside catabolic process"/>
    <property type="evidence" value="ECO:0000318"/>
    <property type="project" value="GO_Central"/>
</dbReference>
<dbReference type="GO" id="GO:0006206">
    <property type="term" value="P:pyrimidine nucleobase metabolic process"/>
    <property type="evidence" value="ECO:0007669"/>
    <property type="project" value="UniProtKB-UniRule"/>
</dbReference>
<dbReference type="CDD" id="cd02651">
    <property type="entry name" value="nuc_hydro_IU_UC_XIUA"/>
    <property type="match status" value="1"/>
</dbReference>
<dbReference type="FunFam" id="3.90.245.10:FF:000002">
    <property type="entry name" value="Non-specific ribonucleoside hydrolase RihC"/>
    <property type="match status" value="1"/>
</dbReference>
<dbReference type="Gene3D" id="3.90.245.10">
    <property type="entry name" value="Ribonucleoside hydrolase-like"/>
    <property type="match status" value="1"/>
</dbReference>
<dbReference type="HAMAP" id="MF_01432">
    <property type="entry name" value="Nucleosid_hydro_RihC"/>
    <property type="match status" value="1"/>
</dbReference>
<dbReference type="InterPro" id="IPR001910">
    <property type="entry name" value="Inosine/uridine_hydrolase_dom"/>
</dbReference>
<dbReference type="InterPro" id="IPR023186">
    <property type="entry name" value="IUNH"/>
</dbReference>
<dbReference type="InterPro" id="IPR022976">
    <property type="entry name" value="Nucleosid_hydro_RihC_nonspecif"/>
</dbReference>
<dbReference type="InterPro" id="IPR036452">
    <property type="entry name" value="Ribo_hydro-like"/>
</dbReference>
<dbReference type="NCBIfam" id="NF008036">
    <property type="entry name" value="PRK10768.1"/>
    <property type="match status" value="1"/>
</dbReference>
<dbReference type="PANTHER" id="PTHR12304">
    <property type="entry name" value="INOSINE-URIDINE PREFERRING NUCLEOSIDE HYDROLASE"/>
    <property type="match status" value="1"/>
</dbReference>
<dbReference type="PANTHER" id="PTHR12304:SF15">
    <property type="entry name" value="NON-SPECIFIC RIBONUCLEOSIDE HYDROLASE RIHC"/>
    <property type="match status" value="1"/>
</dbReference>
<dbReference type="Pfam" id="PF01156">
    <property type="entry name" value="IU_nuc_hydro"/>
    <property type="match status" value="1"/>
</dbReference>
<dbReference type="SUPFAM" id="SSF53590">
    <property type="entry name" value="Nucleoside hydrolase"/>
    <property type="match status" value="1"/>
</dbReference>
<comment type="function">
    <text evidence="1">Hydrolyzes both purine and pyrimidine ribonucleosides with a broad-substrate specificity.</text>
</comment>
<comment type="similarity">
    <text evidence="1">Belongs to the IUNH family. RihC subfamily.</text>
</comment>
<protein>
    <recommendedName>
        <fullName evidence="1">Non-specific ribonucleoside hydrolase RihC</fullName>
        <ecNumber evidence="1">3.2.-.-</ecNumber>
    </recommendedName>
    <alternativeName>
        <fullName evidence="1">Purine/pyrimidine ribonucleoside hydrolase</fullName>
    </alternativeName>
</protein>
<sequence length="306" mass="33122">MTASLHIILDTDPGIDDAAAIAAALFAPQLDLQLITTVAGNVSVEKTTRNALQLLHFWNSDIPLAQGAATPLLRPLRDAAYVHGESGMEGYDFVDHQRQPLAKPAFIAIRDVLMNAPEPMTLVAIGPLTNIALLLMHYPECACNIRRLVLMGGSAGRGNFTPNAEFNIAVDPEAAALVFRSGLEIVMCGLDVTNQAMLSPDFLNKLPALNRTGKMLHSLFNHYRSGSMRTGVRMHDLCAIAWLVRPELFTLQSCFVAVETQGQYTAGTTVVDIEGRLGQPANAQVALALDVDGFRQWVAEVFAYAP</sequence>
<keyword id="KW-0326">Glycosidase</keyword>
<keyword id="KW-0378">Hydrolase</keyword>
<keyword id="KW-1185">Reference proteome</keyword>
<name>RIHC_SALTY</name>
<reference key="1">
    <citation type="journal article" date="2001" name="Nature">
        <title>Complete genome sequence of Salmonella enterica serovar Typhimurium LT2.</title>
        <authorList>
            <person name="McClelland M."/>
            <person name="Sanderson K.E."/>
            <person name="Spieth J."/>
            <person name="Clifton S.W."/>
            <person name="Latreille P."/>
            <person name="Courtney L."/>
            <person name="Porwollik S."/>
            <person name="Ali J."/>
            <person name="Dante M."/>
            <person name="Du F."/>
            <person name="Hou S."/>
            <person name="Layman D."/>
            <person name="Leonard S."/>
            <person name="Nguyen C."/>
            <person name="Scott K."/>
            <person name="Holmes A."/>
            <person name="Grewal N."/>
            <person name="Mulvaney E."/>
            <person name="Ryan E."/>
            <person name="Sun H."/>
            <person name="Florea L."/>
            <person name="Miller W."/>
            <person name="Stoneking T."/>
            <person name="Nhan M."/>
            <person name="Waterston R."/>
            <person name="Wilson R.K."/>
        </authorList>
    </citation>
    <scope>NUCLEOTIDE SEQUENCE [LARGE SCALE GENOMIC DNA]</scope>
    <source>
        <strain>LT2 / SGSC1412 / ATCC 700720</strain>
    </source>
</reference>
<organism>
    <name type="scientific">Salmonella typhimurium (strain LT2 / SGSC1412 / ATCC 700720)</name>
    <dbReference type="NCBI Taxonomy" id="99287"/>
    <lineage>
        <taxon>Bacteria</taxon>
        <taxon>Pseudomonadati</taxon>
        <taxon>Pseudomonadota</taxon>
        <taxon>Gammaproteobacteria</taxon>
        <taxon>Enterobacterales</taxon>
        <taxon>Enterobacteriaceae</taxon>
        <taxon>Salmonella</taxon>
    </lineage>
</organism>
<feature type="chain" id="PRO_0000206837" description="Non-specific ribonucleoside hydrolase RihC">
    <location>
        <begin position="1"/>
        <end position="306"/>
    </location>
</feature>
<feature type="active site" evidence="1">
    <location>
        <position position="235"/>
    </location>
</feature>
<proteinExistence type="inferred from homology"/>
<accession>Q8ZRY7</accession>
<evidence type="ECO:0000255" key="1">
    <source>
        <dbReference type="HAMAP-Rule" id="MF_01432"/>
    </source>
</evidence>
<gene>
    <name evidence="1" type="primary">rihC</name>
    <name type="ordered locus">STM0051</name>
</gene>